<comment type="function">
    <text evidence="1">Could be involved in insertion of integral membrane proteins into the membrane.</text>
</comment>
<comment type="subcellular location">
    <subcellularLocation>
        <location evidence="1">Cell inner membrane</location>
        <topology evidence="1">Peripheral membrane protein</topology>
        <orientation evidence="1">Cytoplasmic side</orientation>
    </subcellularLocation>
</comment>
<comment type="similarity">
    <text evidence="1">Belongs to the UPF0161 family.</text>
</comment>
<comment type="sequence caution" evidence="2">
    <conflict type="erroneous initiation">
        <sequence resource="EMBL-CDS" id="ABS76677"/>
    </conflict>
</comment>
<protein>
    <recommendedName>
        <fullName evidence="1">Putative membrane protein insertion efficiency factor</fullName>
    </recommendedName>
</protein>
<keyword id="KW-0997">Cell inner membrane</keyword>
<keyword id="KW-1003">Cell membrane</keyword>
<keyword id="KW-0472">Membrane</keyword>
<organism>
    <name type="scientific">Coxiella burnetii (strain Dugway 5J108-111)</name>
    <dbReference type="NCBI Taxonomy" id="434922"/>
    <lineage>
        <taxon>Bacteria</taxon>
        <taxon>Pseudomonadati</taxon>
        <taxon>Pseudomonadota</taxon>
        <taxon>Gammaproteobacteria</taxon>
        <taxon>Legionellales</taxon>
        <taxon>Coxiellaceae</taxon>
        <taxon>Coxiella</taxon>
    </lineage>
</organism>
<evidence type="ECO:0000255" key="1">
    <source>
        <dbReference type="HAMAP-Rule" id="MF_00386"/>
    </source>
</evidence>
<evidence type="ECO:0000305" key="2"/>
<reference key="1">
    <citation type="journal article" date="2009" name="Infect. Immun.">
        <title>Comparative genomics reveal extensive transposon-mediated genomic plasticity and diversity among potential effector proteins within the genus Coxiella.</title>
        <authorList>
            <person name="Beare P.A."/>
            <person name="Unsworth N."/>
            <person name="Andoh M."/>
            <person name="Voth D.E."/>
            <person name="Omsland A."/>
            <person name="Gilk S.D."/>
            <person name="Williams K.P."/>
            <person name="Sobral B.W."/>
            <person name="Kupko J.J. III"/>
            <person name="Porcella S.F."/>
            <person name="Samuel J.E."/>
            <person name="Heinzen R.A."/>
        </authorList>
    </citation>
    <scope>NUCLEOTIDE SEQUENCE [LARGE SCALE GENOMIC DNA]</scope>
    <source>
        <strain>Dugway 5J108-111</strain>
    </source>
</reference>
<dbReference type="EMBL" id="CP000733">
    <property type="protein sequence ID" value="ABS76677.2"/>
    <property type="status" value="ALT_INIT"/>
    <property type="molecule type" value="Genomic_DNA"/>
</dbReference>
<dbReference type="KEGG" id="cbd:CBUD_0202"/>
<dbReference type="HOGENOM" id="CLU_144811_6_2_6"/>
<dbReference type="Proteomes" id="UP000008555">
    <property type="component" value="Chromosome"/>
</dbReference>
<dbReference type="GO" id="GO:0005886">
    <property type="term" value="C:plasma membrane"/>
    <property type="evidence" value="ECO:0007669"/>
    <property type="project" value="UniProtKB-SubCell"/>
</dbReference>
<dbReference type="HAMAP" id="MF_00386">
    <property type="entry name" value="UPF0161_YidD"/>
    <property type="match status" value="1"/>
</dbReference>
<dbReference type="InterPro" id="IPR002696">
    <property type="entry name" value="Membr_insert_effic_factor_YidD"/>
</dbReference>
<dbReference type="NCBIfam" id="TIGR00278">
    <property type="entry name" value="membrane protein insertion efficiency factor YidD"/>
    <property type="match status" value="1"/>
</dbReference>
<dbReference type="PANTHER" id="PTHR33383">
    <property type="entry name" value="MEMBRANE PROTEIN INSERTION EFFICIENCY FACTOR-RELATED"/>
    <property type="match status" value="1"/>
</dbReference>
<dbReference type="PANTHER" id="PTHR33383:SF1">
    <property type="entry name" value="MEMBRANE PROTEIN INSERTION EFFICIENCY FACTOR-RELATED"/>
    <property type="match status" value="1"/>
</dbReference>
<dbReference type="Pfam" id="PF01809">
    <property type="entry name" value="YidD"/>
    <property type="match status" value="1"/>
</dbReference>
<dbReference type="SMART" id="SM01234">
    <property type="entry name" value="Haemolytic"/>
    <property type="match status" value="1"/>
</dbReference>
<sequence>MYKQIVHAIGKAIQTLLLGLIKSYRYLISPVLMSSCRFYPSCSCYAETALKRFGVIKGSGLTVWRLLRCHPFHPGGVDFVPEKSNEMV</sequence>
<gene>
    <name type="ordered locus">CBUD_0202</name>
</gene>
<name>YIDD_COXBN</name>
<proteinExistence type="inferred from homology"/>
<feature type="chain" id="PRO_1000080186" description="Putative membrane protein insertion efficiency factor">
    <location>
        <begin position="1"/>
        <end position="88"/>
    </location>
</feature>
<accession>A9KBT2</accession>